<name>LEC7_MEDTR</name>
<sequence length="266" mass="28493">MAINTSRTQILFITIISFLILAQNVNSAAFTVSNFDPYKTNIELEGNAFISDGSIHLTNVIPNSAGRASWGGPVRLWDADTGNLAGFTSVFSFEVAPAGPGLIGDGITFFIAPFNSHIPKNSSGGFLGLFNAETALNTYQNRIVAVEFDSFGGNSGGNPWDPAYPHVGIDVNSIASVTTAPWKTGSILTGFNAIAFVNYEPVEKNLSVVVRYPGGNFVNGTSNSVSFIIDLRTVLPEWVRIGFSGATGQLVELHKILSWTFKSSFQ</sequence>
<organism>
    <name type="scientific">Medicago truncatula</name>
    <name type="common">Barrel medic</name>
    <name type="synonym">Medicago tribuloides</name>
    <dbReference type="NCBI Taxonomy" id="3880"/>
    <lineage>
        <taxon>Eukaryota</taxon>
        <taxon>Viridiplantae</taxon>
        <taxon>Streptophyta</taxon>
        <taxon>Embryophyta</taxon>
        <taxon>Tracheophyta</taxon>
        <taxon>Spermatophyta</taxon>
        <taxon>Magnoliopsida</taxon>
        <taxon>eudicotyledons</taxon>
        <taxon>Gunneridae</taxon>
        <taxon>Pentapetalae</taxon>
        <taxon>rosids</taxon>
        <taxon>fabids</taxon>
        <taxon>Fabales</taxon>
        <taxon>Fabaceae</taxon>
        <taxon>Papilionoideae</taxon>
        <taxon>50 kb inversion clade</taxon>
        <taxon>NPAAA clade</taxon>
        <taxon>Hologalegina</taxon>
        <taxon>IRL clade</taxon>
        <taxon>Trifolieae</taxon>
        <taxon>Medicago</taxon>
    </lineage>
</organism>
<accession>G7LII0</accession>
<accession>Q2PP76</accession>
<gene>
    <name evidence="4" type="primary">LEC7</name>
    <name evidence="7" type="ordered locus">MTR_8g068030</name>
    <name evidence="8" type="ORF">MtrunA17_Chr8g0367051</name>
</gene>
<reference key="1">
    <citation type="journal article" date="2005" name="Mol. Plant Microbe Interact.">
        <title>Combined transcriptome profiling reveals a novel family of arbuscular mycorrhizal-specific Medicago truncatula lectin genes.</title>
        <authorList>
            <person name="Frenzel A."/>
            <person name="Manthey K."/>
            <person name="Perlick A.M."/>
            <person name="Meyer F."/>
            <person name="Puehler A."/>
            <person name="Kuester H."/>
            <person name="Krajinski F."/>
        </authorList>
    </citation>
    <scope>NUCLEOTIDE SEQUENCE [MRNA]</scope>
    <scope>INDUCTION BY ARBUSCULAR MYCORRHIZAL FUNGI</scope>
    <scope>DEVELOPMENTAL STAGE</scope>
    <source>
        <strain>cv. Jemalong A17</strain>
    </source>
</reference>
<reference key="2">
    <citation type="journal article" date="2011" name="Nature">
        <title>The Medicago genome provides insight into the evolution of rhizobial symbioses.</title>
        <authorList>
            <person name="Young N.D."/>
            <person name="Debelle F."/>
            <person name="Oldroyd G.E.D."/>
            <person name="Geurts R."/>
            <person name="Cannon S.B."/>
            <person name="Udvardi M.K."/>
            <person name="Benedito V.A."/>
            <person name="Mayer K.F.X."/>
            <person name="Gouzy J."/>
            <person name="Schoof H."/>
            <person name="Van de Peer Y."/>
            <person name="Proost S."/>
            <person name="Cook D.R."/>
            <person name="Meyers B.C."/>
            <person name="Spannagl M."/>
            <person name="Cheung F."/>
            <person name="De Mita S."/>
            <person name="Krishnakumar V."/>
            <person name="Gundlach H."/>
            <person name="Zhou S."/>
            <person name="Mudge J."/>
            <person name="Bharti A.K."/>
            <person name="Murray J.D."/>
            <person name="Naoumkina M.A."/>
            <person name="Rosen B."/>
            <person name="Silverstein K.A.T."/>
            <person name="Tang H."/>
            <person name="Rombauts S."/>
            <person name="Zhao P.X."/>
            <person name="Zhou P."/>
            <person name="Barbe V."/>
            <person name="Bardou P."/>
            <person name="Bechner M."/>
            <person name="Bellec A."/>
            <person name="Berger A."/>
            <person name="Berges H."/>
            <person name="Bidwell S."/>
            <person name="Bisseling T."/>
            <person name="Choisne N."/>
            <person name="Couloux A."/>
            <person name="Denny R."/>
            <person name="Deshpande S."/>
            <person name="Dai X."/>
            <person name="Doyle J.J."/>
            <person name="Dudez A.-M."/>
            <person name="Farmer A.D."/>
            <person name="Fouteau S."/>
            <person name="Franken C."/>
            <person name="Gibelin C."/>
            <person name="Gish J."/>
            <person name="Goldstein S."/>
            <person name="Gonzalez A.J."/>
            <person name="Green P.J."/>
            <person name="Hallab A."/>
            <person name="Hartog M."/>
            <person name="Hua A."/>
            <person name="Humphray S.J."/>
            <person name="Jeong D.-H."/>
            <person name="Jing Y."/>
            <person name="Jocker A."/>
            <person name="Kenton S.M."/>
            <person name="Kim D.-J."/>
            <person name="Klee K."/>
            <person name="Lai H."/>
            <person name="Lang C."/>
            <person name="Lin S."/>
            <person name="Macmil S.L."/>
            <person name="Magdelenat G."/>
            <person name="Matthews L."/>
            <person name="McCorrison J."/>
            <person name="Monaghan E.L."/>
            <person name="Mun J.-H."/>
            <person name="Najar F.Z."/>
            <person name="Nicholson C."/>
            <person name="Noirot C."/>
            <person name="O'Bleness M."/>
            <person name="Paule C.R."/>
            <person name="Poulain J."/>
            <person name="Prion F."/>
            <person name="Qin B."/>
            <person name="Qu C."/>
            <person name="Retzel E.F."/>
            <person name="Riddle C."/>
            <person name="Sallet E."/>
            <person name="Samain S."/>
            <person name="Samson N."/>
            <person name="Sanders I."/>
            <person name="Saurat O."/>
            <person name="Scarpelli C."/>
            <person name="Schiex T."/>
            <person name="Segurens B."/>
            <person name="Severin A.J."/>
            <person name="Sherrier D.J."/>
            <person name="Shi R."/>
            <person name="Sims S."/>
            <person name="Singer S.R."/>
            <person name="Sinharoy S."/>
            <person name="Sterck L."/>
            <person name="Viollet A."/>
            <person name="Wang B.-B."/>
            <person name="Wang K."/>
            <person name="Wang M."/>
            <person name="Wang X."/>
            <person name="Warfsmann J."/>
            <person name="Weissenbach J."/>
            <person name="White D.D."/>
            <person name="White J.D."/>
            <person name="Wiley G.B."/>
            <person name="Wincker P."/>
            <person name="Xing Y."/>
            <person name="Yang L."/>
            <person name="Yao Z."/>
            <person name="Ying F."/>
            <person name="Zhai J."/>
            <person name="Zhou L."/>
            <person name="Zuber A."/>
            <person name="Denarie J."/>
            <person name="Dixon R.A."/>
            <person name="May G.D."/>
            <person name="Schwartz D.C."/>
            <person name="Rogers J."/>
            <person name="Quetier F."/>
            <person name="Town C.D."/>
            <person name="Roe B.A."/>
        </authorList>
    </citation>
    <scope>NUCLEOTIDE SEQUENCE [LARGE SCALE GENOMIC DNA]</scope>
    <source>
        <strain>cv. Jemalong A17</strain>
    </source>
</reference>
<reference key="3">
    <citation type="journal article" date="2014" name="BMC Genomics">
        <title>An improved genome release (version Mt4.0) for the model legume Medicago truncatula.</title>
        <authorList>
            <person name="Tang H."/>
            <person name="Krishnakumar V."/>
            <person name="Bidwell S."/>
            <person name="Rosen B."/>
            <person name="Chan A."/>
            <person name="Zhou S."/>
            <person name="Gentzbittel L."/>
            <person name="Childs K.L."/>
            <person name="Yandell M."/>
            <person name="Gundlach H."/>
            <person name="Mayer K.F."/>
            <person name="Schwartz D.C."/>
            <person name="Town C.D."/>
        </authorList>
    </citation>
    <scope>GENOME REANNOTATION</scope>
    <source>
        <strain>cv. Jemalong A17</strain>
    </source>
</reference>
<reference key="4">
    <citation type="journal article" date="2018" name="Nat. Plants">
        <title>Whole-genome landscape of Medicago truncatula symbiotic genes.</title>
        <authorList>
            <person name="Pecrix Y."/>
            <person name="Staton S.E."/>
            <person name="Sallet E."/>
            <person name="Lelandais-Briere C."/>
            <person name="Moreau S."/>
            <person name="Carrere S."/>
            <person name="Blein T."/>
            <person name="Jardinaud M.F."/>
            <person name="Latrasse D."/>
            <person name="Zouine M."/>
            <person name="Zahm M."/>
            <person name="Kreplak J."/>
            <person name="Mayjonade B."/>
            <person name="Satge C."/>
            <person name="Perez M."/>
            <person name="Cauet S."/>
            <person name="Marande W."/>
            <person name="Chantry-Darmon C."/>
            <person name="Lopez-Roques C."/>
            <person name="Bouchez O."/>
            <person name="Berard A."/>
            <person name="Debelle F."/>
            <person name="Munos S."/>
            <person name="Bendahmane A."/>
            <person name="Berges H."/>
            <person name="Niebel A."/>
            <person name="Buitink J."/>
            <person name="Frugier F."/>
            <person name="Benhamed M."/>
            <person name="Crespi M."/>
            <person name="Gouzy J."/>
            <person name="Gamas P."/>
        </authorList>
    </citation>
    <scope>NUCLEOTIDE SEQUENCE [LARGE SCALE GENOMIC DNA]</scope>
    <source>
        <strain>cv. Jemalong A17</strain>
    </source>
</reference>
<comment type="function">
    <text evidence="6">May be involved in arbuscular mycorrhizal (AM) symbiosis with AM fungi.</text>
</comment>
<comment type="developmental stage">
    <text evidence="3">Expressed in cortical cells containing arbuscules of mycorrhizal roots upon arbuscular mycorrhizal (AM) symbiosis with AM fungi (e.g. Glomus intraradices).</text>
</comment>
<comment type="induction">
    <text evidence="3">Accumulates in roots during colonization by arbuscular mycorrhizal (AM) fungi (e.g. Glomus intraradices).</text>
</comment>
<comment type="similarity">
    <text evidence="5">Belongs to the leguminous lectin family.</text>
</comment>
<proteinExistence type="evidence at transcript level"/>
<dbReference type="EMBL" id="DQ314209">
    <property type="protein sequence ID" value="ABC47813.1"/>
    <property type="molecule type" value="mRNA"/>
</dbReference>
<dbReference type="EMBL" id="CM001224">
    <property type="protein sequence ID" value="AET03346.1"/>
    <property type="molecule type" value="Genomic_DNA"/>
</dbReference>
<dbReference type="EMBL" id="PSQE01000008">
    <property type="protein sequence ID" value="RHN41531.1"/>
    <property type="molecule type" value="Genomic_DNA"/>
</dbReference>
<dbReference type="RefSeq" id="XP_003628870.1">
    <property type="nucleotide sequence ID" value="XM_003628822.2"/>
</dbReference>
<dbReference type="SMR" id="G7LII0"/>
<dbReference type="STRING" id="3880.G7LII0"/>
<dbReference type="GlyCosmos" id="G7LII0">
    <property type="glycosylation" value="3 sites, No reported glycans"/>
</dbReference>
<dbReference type="PaxDb" id="3880-AET03346"/>
<dbReference type="EnsemblPlants" id="rna47864">
    <property type="protein sequence ID" value="RHN41531.1"/>
    <property type="gene ID" value="gene47864"/>
</dbReference>
<dbReference type="GeneID" id="11430870"/>
<dbReference type="Gramene" id="rna47864">
    <property type="protein sequence ID" value="RHN41531.1"/>
    <property type="gene ID" value="gene47864"/>
</dbReference>
<dbReference type="KEGG" id="mtr:11430870"/>
<dbReference type="eggNOG" id="ENOG502QTX3">
    <property type="taxonomic scope" value="Eukaryota"/>
</dbReference>
<dbReference type="HOGENOM" id="CLU_000288_62_2_1"/>
<dbReference type="OMA" id="YINPIQF"/>
<dbReference type="OrthoDB" id="2014828at2759"/>
<dbReference type="Proteomes" id="UP000002051">
    <property type="component" value="Chromosome 8"/>
</dbReference>
<dbReference type="Proteomes" id="UP000265566">
    <property type="component" value="Chromosome 8"/>
</dbReference>
<dbReference type="GO" id="GO:0030246">
    <property type="term" value="F:carbohydrate binding"/>
    <property type="evidence" value="ECO:0007669"/>
    <property type="project" value="UniProtKB-KW"/>
</dbReference>
<dbReference type="GO" id="GO:0009610">
    <property type="term" value="P:response to symbiotic fungus"/>
    <property type="evidence" value="ECO:0000270"/>
    <property type="project" value="UniProtKB"/>
</dbReference>
<dbReference type="CDD" id="cd06899">
    <property type="entry name" value="lectin_legume_LecRK_Arcelin_ConA"/>
    <property type="match status" value="1"/>
</dbReference>
<dbReference type="Gene3D" id="2.60.120.200">
    <property type="match status" value="1"/>
</dbReference>
<dbReference type="InterPro" id="IPR013320">
    <property type="entry name" value="ConA-like_dom_sf"/>
</dbReference>
<dbReference type="InterPro" id="IPR016363">
    <property type="entry name" value="L-lectin"/>
</dbReference>
<dbReference type="InterPro" id="IPR000985">
    <property type="entry name" value="Lectin_LegA_CS"/>
</dbReference>
<dbReference type="InterPro" id="IPR019825">
    <property type="entry name" value="Lectin_legB_Mn/Ca_BS"/>
</dbReference>
<dbReference type="InterPro" id="IPR001220">
    <property type="entry name" value="Legume_lectin_dom"/>
</dbReference>
<dbReference type="InterPro" id="IPR050258">
    <property type="entry name" value="Leguminous_Lectin"/>
</dbReference>
<dbReference type="PANTHER" id="PTHR32401">
    <property type="entry name" value="CONCANAVALIN A-LIKE LECTIN FAMILY PROTEIN"/>
    <property type="match status" value="1"/>
</dbReference>
<dbReference type="PANTHER" id="PTHR32401:SF52">
    <property type="entry name" value="LECTIN 7"/>
    <property type="match status" value="1"/>
</dbReference>
<dbReference type="Pfam" id="PF00139">
    <property type="entry name" value="Lectin_legB"/>
    <property type="match status" value="1"/>
</dbReference>
<dbReference type="PIRSF" id="PIRSF002690">
    <property type="entry name" value="L-type_lectin_plant"/>
    <property type="match status" value="1"/>
</dbReference>
<dbReference type="SUPFAM" id="SSF49899">
    <property type="entry name" value="Concanavalin A-like lectins/glucanases"/>
    <property type="match status" value="1"/>
</dbReference>
<dbReference type="PROSITE" id="PS00308">
    <property type="entry name" value="LECTIN_LEGUME_ALPHA"/>
    <property type="match status" value="1"/>
</dbReference>
<dbReference type="PROSITE" id="PS00307">
    <property type="entry name" value="LECTIN_LEGUME_BETA"/>
    <property type="match status" value="1"/>
</dbReference>
<evidence type="ECO:0000255" key="1"/>
<evidence type="ECO:0000255" key="2">
    <source>
        <dbReference type="PROSITE-ProRule" id="PRU00498"/>
    </source>
</evidence>
<evidence type="ECO:0000269" key="3">
    <source>
    </source>
</evidence>
<evidence type="ECO:0000303" key="4">
    <source>
    </source>
</evidence>
<evidence type="ECO:0000305" key="5"/>
<evidence type="ECO:0000305" key="6">
    <source>
    </source>
</evidence>
<evidence type="ECO:0000312" key="7">
    <source>
        <dbReference type="EMBL" id="AET03346.1"/>
    </source>
</evidence>
<evidence type="ECO:0000312" key="8">
    <source>
        <dbReference type="EMBL" id="RHN41531.1"/>
    </source>
</evidence>
<keyword id="KW-0325">Glycoprotein</keyword>
<keyword id="KW-0430">Lectin</keyword>
<keyword id="KW-1185">Reference proteome</keyword>
<keyword id="KW-0732">Signal</keyword>
<protein>
    <recommendedName>
        <fullName evidence="4">Lectin 7</fullName>
        <shortName evidence="4">MtLec7</shortName>
    </recommendedName>
    <alternativeName>
        <fullName evidence="5">Agglutinin LEC7</fullName>
    </alternativeName>
</protein>
<feature type="signal peptide" evidence="1">
    <location>
        <begin position="1"/>
        <end position="27"/>
    </location>
</feature>
<feature type="chain" id="PRO_5014574296" description="Lectin 7">
    <location>
        <begin position="28"/>
        <end position="266"/>
    </location>
</feature>
<feature type="glycosylation site" description="N-linked (GlcNAc...) asparagine" evidence="2">
    <location>
        <position position="121"/>
    </location>
</feature>
<feature type="glycosylation site" description="N-linked (GlcNAc...) asparagine" evidence="2">
    <location>
        <position position="205"/>
    </location>
</feature>
<feature type="glycosylation site" description="N-linked (GlcNAc...) asparagine" evidence="2">
    <location>
        <position position="219"/>
    </location>
</feature>
<feature type="sequence conflict" description="In Ref. 1; ABC47813." evidence="5" ref="1">
    <original>MAI</original>
    <variation>MRGF</variation>
    <location>
        <begin position="1"/>
        <end position="3"/>
    </location>
</feature>
<feature type="sequence conflict" description="In Ref. 1; ABC47813." evidence="5" ref="1">
    <original>V</original>
    <variation>G</variation>
    <location>
        <position position="234"/>
    </location>
</feature>
<feature type="sequence conflict" description="In Ref. 1; ABC47813." evidence="5" ref="1">
    <original>V</original>
    <variation>G</variation>
    <location>
        <position position="239"/>
    </location>
</feature>